<proteinExistence type="inferred from homology"/>
<sequence length="118" mass="13002">MSQLTYLFRTAPHSHSSGREGVDALLAASAYCEAISVVFIGDGVYQLLAGQQTASILCKDYAPMFKLFDLYDIEHVYVCQQSLQQRGLTSEDLLIEVEVVDTAQLQGVLHNSAQLLSF</sequence>
<dbReference type="EMBL" id="AE016795">
    <property type="protein sequence ID" value="AAO09788.1"/>
    <property type="molecule type" value="Genomic_DNA"/>
</dbReference>
<dbReference type="RefSeq" id="WP_011079313.1">
    <property type="nucleotide sequence ID" value="NC_004459.3"/>
</dbReference>
<dbReference type="SMR" id="Q8DCR2"/>
<dbReference type="KEGG" id="vvu:VV1_1334"/>
<dbReference type="HOGENOM" id="CLU_155943_1_0_6"/>
<dbReference type="Proteomes" id="UP000002275">
    <property type="component" value="Chromosome 1"/>
</dbReference>
<dbReference type="GO" id="GO:0005737">
    <property type="term" value="C:cytoplasm"/>
    <property type="evidence" value="ECO:0007669"/>
    <property type="project" value="UniProtKB-SubCell"/>
</dbReference>
<dbReference type="Gene3D" id="3.40.1260.10">
    <property type="entry name" value="DsrEFH-like"/>
    <property type="match status" value="1"/>
</dbReference>
<dbReference type="InterPro" id="IPR027396">
    <property type="entry name" value="DsrEFH-like"/>
</dbReference>
<dbReference type="InterPro" id="IPR003787">
    <property type="entry name" value="Sulphur_relay_DsrE/F-like"/>
</dbReference>
<dbReference type="InterPro" id="IPR017462">
    <property type="entry name" value="Sulphur_relay_TusC/DsrF"/>
</dbReference>
<dbReference type="NCBIfam" id="NF001238">
    <property type="entry name" value="PRK00211.1"/>
    <property type="match status" value="1"/>
</dbReference>
<dbReference type="NCBIfam" id="TIGR03010">
    <property type="entry name" value="sulf_tusC_dsrF"/>
    <property type="match status" value="1"/>
</dbReference>
<dbReference type="PANTHER" id="PTHR38780">
    <property type="entry name" value="PROTEIN TUSC"/>
    <property type="match status" value="1"/>
</dbReference>
<dbReference type="PANTHER" id="PTHR38780:SF1">
    <property type="entry name" value="PROTEIN TUSC"/>
    <property type="match status" value="1"/>
</dbReference>
<dbReference type="Pfam" id="PF02635">
    <property type="entry name" value="DsrE"/>
    <property type="match status" value="1"/>
</dbReference>
<dbReference type="SUPFAM" id="SSF75169">
    <property type="entry name" value="DsrEFH-like"/>
    <property type="match status" value="1"/>
</dbReference>
<accession>Q8DCR2</accession>
<name>TUSC_VIBVU</name>
<protein>
    <recommendedName>
        <fullName>Protein TusC homolog</fullName>
    </recommendedName>
</protein>
<keyword id="KW-0963">Cytoplasm</keyword>
<organism>
    <name type="scientific">Vibrio vulnificus (strain CMCP6)</name>
    <dbReference type="NCBI Taxonomy" id="216895"/>
    <lineage>
        <taxon>Bacteria</taxon>
        <taxon>Pseudomonadati</taxon>
        <taxon>Pseudomonadota</taxon>
        <taxon>Gammaproteobacteria</taxon>
        <taxon>Vibrionales</taxon>
        <taxon>Vibrionaceae</taxon>
        <taxon>Vibrio</taxon>
    </lineage>
</organism>
<evidence type="ECO:0000250" key="1"/>
<evidence type="ECO:0000305" key="2"/>
<gene>
    <name type="primary">tusC</name>
    <name type="ordered locus">VV1_1334</name>
</gene>
<comment type="function">
    <text evidence="1">Could be part of a sulfur-relay system.</text>
</comment>
<comment type="subcellular location">
    <subcellularLocation>
        <location evidence="1">Cytoplasm</location>
    </subcellularLocation>
</comment>
<comment type="similarity">
    <text evidence="2">Belongs to the DsrF/TusC family.</text>
</comment>
<reference key="1">
    <citation type="submission" date="2002-12" db="EMBL/GenBank/DDBJ databases">
        <title>Complete genome sequence of Vibrio vulnificus CMCP6.</title>
        <authorList>
            <person name="Rhee J.H."/>
            <person name="Kim S.Y."/>
            <person name="Chung S.S."/>
            <person name="Kim J.J."/>
            <person name="Moon Y.H."/>
            <person name="Jeong H."/>
            <person name="Choy H.E."/>
        </authorList>
    </citation>
    <scope>NUCLEOTIDE SEQUENCE [LARGE SCALE GENOMIC DNA]</scope>
    <source>
        <strain>CMCP6</strain>
    </source>
</reference>
<feature type="chain" id="PRO_0000214894" description="Protein TusC homolog">
    <location>
        <begin position="1"/>
        <end position="118"/>
    </location>
</feature>